<dbReference type="EC" id="3.1.2.28" evidence="1"/>
<dbReference type="EMBL" id="CP000553">
    <property type="protein sequence ID" value="ABM74812.1"/>
    <property type="molecule type" value="Genomic_DNA"/>
</dbReference>
<dbReference type="RefSeq" id="WP_011823032.1">
    <property type="nucleotide sequence ID" value="NC_008819.1"/>
</dbReference>
<dbReference type="SMR" id="A2C002"/>
<dbReference type="KEGG" id="pme:NATL1_02481"/>
<dbReference type="eggNOG" id="COG0824">
    <property type="taxonomic scope" value="Bacteria"/>
</dbReference>
<dbReference type="HOGENOM" id="CLU_101141_5_3_3"/>
<dbReference type="UniPathway" id="UPA00995"/>
<dbReference type="UniPathway" id="UPA01057">
    <property type="reaction ID" value="UER01033"/>
</dbReference>
<dbReference type="Proteomes" id="UP000002592">
    <property type="component" value="Chromosome"/>
</dbReference>
<dbReference type="GO" id="GO:0061522">
    <property type="term" value="F:1,4-dihydroxy-2-naphthoyl-CoA thioesterase activity"/>
    <property type="evidence" value="ECO:0007669"/>
    <property type="project" value="UniProtKB-EC"/>
</dbReference>
<dbReference type="GO" id="GO:0042372">
    <property type="term" value="P:phylloquinone biosynthetic process"/>
    <property type="evidence" value="ECO:0007669"/>
    <property type="project" value="UniProtKB-UniRule"/>
</dbReference>
<dbReference type="CDD" id="cd00586">
    <property type="entry name" value="4HBT"/>
    <property type="match status" value="1"/>
</dbReference>
<dbReference type="Gene3D" id="3.10.129.10">
    <property type="entry name" value="Hotdog Thioesterase"/>
    <property type="match status" value="1"/>
</dbReference>
<dbReference type="HAMAP" id="MF_02101">
    <property type="entry name" value="DHNA_CoA_hydrolase"/>
    <property type="match status" value="1"/>
</dbReference>
<dbReference type="InterPro" id="IPR022829">
    <property type="entry name" value="DHNA_CoA_hydrolase"/>
</dbReference>
<dbReference type="InterPro" id="IPR029069">
    <property type="entry name" value="HotDog_dom_sf"/>
</dbReference>
<dbReference type="Pfam" id="PF13279">
    <property type="entry name" value="4HBT_2"/>
    <property type="match status" value="1"/>
</dbReference>
<dbReference type="SUPFAM" id="SSF54637">
    <property type="entry name" value="Thioesterase/thiol ester dehydrase-isomerase"/>
    <property type="match status" value="1"/>
</dbReference>
<comment type="function">
    <text evidence="1">Catalyzes the hydrolysis of 1,4-dihydroxy-2-naphthoyl-CoA (DHNA-CoA) to 1,4-dihydroxy-2-naphthoate (DHNA), a reaction involved in phylloquinone (vitamin K1) biosynthesis.</text>
</comment>
<comment type="catalytic activity">
    <reaction evidence="1">
        <text>1,4-dihydroxy-2-naphthoyl-CoA + H2O = 1,4-dihydroxy-2-naphthoate + CoA + H(+)</text>
        <dbReference type="Rhea" id="RHEA:26309"/>
        <dbReference type="ChEBI" id="CHEBI:11173"/>
        <dbReference type="ChEBI" id="CHEBI:15377"/>
        <dbReference type="ChEBI" id="CHEBI:15378"/>
        <dbReference type="ChEBI" id="CHEBI:57287"/>
        <dbReference type="ChEBI" id="CHEBI:58897"/>
        <dbReference type="EC" id="3.1.2.28"/>
    </reaction>
</comment>
<comment type="pathway">
    <text evidence="1">Cofactor biosynthesis; phylloquinone biosynthesis.</text>
</comment>
<comment type="pathway">
    <text evidence="1">Quinol/quinone metabolism; 1,4-dihydroxy-2-naphthoate biosynthesis; 1,4-dihydroxy-2-naphthoate from chorismate: step 7/7.</text>
</comment>
<comment type="similarity">
    <text evidence="1">Belongs to the 4-hydroxybenzoyl-CoA thioesterase family. DHNA-CoA hydrolase subfamily.</text>
</comment>
<proteinExistence type="inferred from homology"/>
<name>DNCH_PROM1</name>
<feature type="chain" id="PRO_0000377024" description="1,4-dihydroxy-2-naphthoyl-CoA hydrolase">
    <location>
        <begin position="1"/>
        <end position="150"/>
    </location>
</feature>
<feature type="active site" evidence="1">
    <location>
        <position position="22"/>
    </location>
</feature>
<accession>A2C002</accession>
<gene>
    <name type="ordered locus">NATL1_02481</name>
</gene>
<reference key="1">
    <citation type="journal article" date="2007" name="PLoS Genet.">
        <title>Patterns and implications of gene gain and loss in the evolution of Prochlorococcus.</title>
        <authorList>
            <person name="Kettler G.C."/>
            <person name="Martiny A.C."/>
            <person name="Huang K."/>
            <person name="Zucker J."/>
            <person name="Coleman M.L."/>
            <person name="Rodrigue S."/>
            <person name="Chen F."/>
            <person name="Lapidus A."/>
            <person name="Ferriera S."/>
            <person name="Johnson J."/>
            <person name="Steglich C."/>
            <person name="Church G.M."/>
            <person name="Richardson P."/>
            <person name="Chisholm S.W."/>
        </authorList>
    </citation>
    <scope>NUCLEOTIDE SEQUENCE [LARGE SCALE GENOMIC DNA]</scope>
    <source>
        <strain>NATL1A</strain>
    </source>
</reference>
<protein>
    <recommendedName>
        <fullName evidence="1">1,4-dihydroxy-2-naphthoyl-CoA hydrolase</fullName>
        <shortName evidence="1">DHNA-CoA hydrolase</shortName>
        <ecNumber evidence="1">3.1.2.28</ecNumber>
    </recommendedName>
    <alternativeName>
        <fullName evidence="1">DHNA-CoA thioesterase</fullName>
    </alternativeName>
</protein>
<sequence length="150" mass="17456">MEKRNPREWLCLNRTVRFGETDAAGVVHFVELFRWCHETWEESLEKFGIVLKEIFPSTQINTSQLDVALPVVHCEANYFQPLYVGDTINIELYPEKINESSFVLLFKFKKNGEQIGTTNIKHVSINPITREKCALSKQINLWLHESGLNF</sequence>
<keyword id="KW-0378">Hydrolase</keyword>
<evidence type="ECO:0000255" key="1">
    <source>
        <dbReference type="HAMAP-Rule" id="MF_02101"/>
    </source>
</evidence>
<organism>
    <name type="scientific">Prochlorococcus marinus (strain NATL1A)</name>
    <dbReference type="NCBI Taxonomy" id="167555"/>
    <lineage>
        <taxon>Bacteria</taxon>
        <taxon>Bacillati</taxon>
        <taxon>Cyanobacteriota</taxon>
        <taxon>Cyanophyceae</taxon>
        <taxon>Synechococcales</taxon>
        <taxon>Prochlorococcaceae</taxon>
        <taxon>Prochlorococcus</taxon>
    </lineage>
</organism>